<reference key="1">
    <citation type="journal article" date="2009" name="PLoS Genet.">
        <title>Organised genome dynamics in the Escherichia coli species results in highly diverse adaptive paths.</title>
        <authorList>
            <person name="Touchon M."/>
            <person name="Hoede C."/>
            <person name="Tenaillon O."/>
            <person name="Barbe V."/>
            <person name="Baeriswyl S."/>
            <person name="Bidet P."/>
            <person name="Bingen E."/>
            <person name="Bonacorsi S."/>
            <person name="Bouchier C."/>
            <person name="Bouvet O."/>
            <person name="Calteau A."/>
            <person name="Chiapello H."/>
            <person name="Clermont O."/>
            <person name="Cruveiller S."/>
            <person name="Danchin A."/>
            <person name="Diard M."/>
            <person name="Dossat C."/>
            <person name="Karoui M.E."/>
            <person name="Frapy E."/>
            <person name="Garry L."/>
            <person name="Ghigo J.M."/>
            <person name="Gilles A.M."/>
            <person name="Johnson J."/>
            <person name="Le Bouguenec C."/>
            <person name="Lescat M."/>
            <person name="Mangenot S."/>
            <person name="Martinez-Jehanne V."/>
            <person name="Matic I."/>
            <person name="Nassif X."/>
            <person name="Oztas S."/>
            <person name="Petit M.A."/>
            <person name="Pichon C."/>
            <person name="Rouy Z."/>
            <person name="Ruf C.S."/>
            <person name="Schneider D."/>
            <person name="Tourret J."/>
            <person name="Vacherie B."/>
            <person name="Vallenet D."/>
            <person name="Medigue C."/>
            <person name="Rocha E.P.C."/>
            <person name="Denamur E."/>
        </authorList>
    </citation>
    <scope>NUCLEOTIDE SEQUENCE [LARGE SCALE GENOMIC DNA]</scope>
    <source>
        <strain>ED1a</strain>
    </source>
</reference>
<proteinExistence type="inferred from homology"/>
<evidence type="ECO:0000255" key="1">
    <source>
        <dbReference type="HAMAP-Rule" id="MF_00388"/>
    </source>
</evidence>
<sequence>MIKQRTLKRIVQATGVGLHTGKKVTLTLRPAPANTGVIYRRTDLNPPVDFPADAKSVRDTMLCTCLVNEHDVRISTVEHLNAALAGLGIDNIVIEVNAPEIPIMDGSAAPFVYLLLDAGIDELNCAKKFVRIKETVRVEDGDKWAEFKPYNGFSLDFTIDFNHPAIDSSNQRYAMNFSADAFMRQISRARTFGFMRDIEYLQSRGLCLGGSFDCAIVVDDYRVLNEDGLRFEDEFVRHKMLDAIGDLFMCGHNIIGAFTAYKSGHALNNKLLQAVLAKQEAWEYVTFQDDAELPLAFKAPSAVLA</sequence>
<protein>
    <recommendedName>
        <fullName evidence="1">UDP-3-O-acyl-N-acetylglucosamine deacetylase</fullName>
        <shortName evidence="1">UDP-3-O-acyl-GlcNAc deacetylase</shortName>
        <ecNumber evidence="1">3.5.1.108</ecNumber>
    </recommendedName>
    <alternativeName>
        <fullName evidence="1">UDP-3-O-[R-3-hydroxymyristoyl]-N-acetylglucosamine deacetylase</fullName>
    </alternativeName>
</protein>
<gene>
    <name evidence="1" type="primary">lpxC</name>
    <name type="ordered locus">ECED1_0097</name>
</gene>
<comment type="function">
    <text evidence="1">Catalyzes the hydrolysis of UDP-3-O-myristoyl-N-acetylglucosamine to form UDP-3-O-myristoylglucosamine and acetate, the committed step in lipid A biosynthesis.</text>
</comment>
<comment type="catalytic activity">
    <reaction evidence="1">
        <text>a UDP-3-O-[(3R)-3-hydroxyacyl]-N-acetyl-alpha-D-glucosamine + H2O = a UDP-3-O-[(3R)-3-hydroxyacyl]-alpha-D-glucosamine + acetate</text>
        <dbReference type="Rhea" id="RHEA:67816"/>
        <dbReference type="ChEBI" id="CHEBI:15377"/>
        <dbReference type="ChEBI" id="CHEBI:30089"/>
        <dbReference type="ChEBI" id="CHEBI:137740"/>
        <dbReference type="ChEBI" id="CHEBI:173225"/>
        <dbReference type="EC" id="3.5.1.108"/>
    </reaction>
</comment>
<comment type="cofactor">
    <cofactor evidence="1">
        <name>Zn(2+)</name>
        <dbReference type="ChEBI" id="CHEBI:29105"/>
    </cofactor>
</comment>
<comment type="pathway">
    <text evidence="1">Glycolipid biosynthesis; lipid IV(A) biosynthesis; lipid IV(A) from (3R)-3-hydroxytetradecanoyl-[acyl-carrier-protein] and UDP-N-acetyl-alpha-D-glucosamine: step 2/6.</text>
</comment>
<comment type="similarity">
    <text evidence="1">Belongs to the LpxC family.</text>
</comment>
<name>LPXC_ECO81</name>
<organism>
    <name type="scientific">Escherichia coli O81 (strain ED1a)</name>
    <dbReference type="NCBI Taxonomy" id="585397"/>
    <lineage>
        <taxon>Bacteria</taxon>
        <taxon>Pseudomonadati</taxon>
        <taxon>Pseudomonadota</taxon>
        <taxon>Gammaproteobacteria</taxon>
        <taxon>Enterobacterales</taxon>
        <taxon>Enterobacteriaceae</taxon>
        <taxon>Escherichia</taxon>
    </lineage>
</organism>
<feature type="chain" id="PRO_1000134397" description="UDP-3-O-acyl-N-acetylglucosamine deacetylase">
    <location>
        <begin position="1"/>
        <end position="305"/>
    </location>
</feature>
<feature type="active site" description="Proton donor" evidence="1">
    <location>
        <position position="265"/>
    </location>
</feature>
<feature type="binding site" evidence="1">
    <location>
        <position position="79"/>
    </location>
    <ligand>
        <name>Zn(2+)</name>
        <dbReference type="ChEBI" id="CHEBI:29105"/>
    </ligand>
</feature>
<feature type="binding site" evidence="1">
    <location>
        <position position="238"/>
    </location>
    <ligand>
        <name>Zn(2+)</name>
        <dbReference type="ChEBI" id="CHEBI:29105"/>
    </ligand>
</feature>
<feature type="binding site" evidence="1">
    <location>
        <position position="242"/>
    </location>
    <ligand>
        <name>Zn(2+)</name>
        <dbReference type="ChEBI" id="CHEBI:29105"/>
    </ligand>
</feature>
<keyword id="KW-0378">Hydrolase</keyword>
<keyword id="KW-0441">Lipid A biosynthesis</keyword>
<keyword id="KW-0444">Lipid biosynthesis</keyword>
<keyword id="KW-0443">Lipid metabolism</keyword>
<keyword id="KW-0479">Metal-binding</keyword>
<keyword id="KW-0862">Zinc</keyword>
<dbReference type="EC" id="3.5.1.108" evidence="1"/>
<dbReference type="EMBL" id="CU928162">
    <property type="protein sequence ID" value="CAR06320.1"/>
    <property type="molecule type" value="Genomic_DNA"/>
</dbReference>
<dbReference type="RefSeq" id="WP_000595482.1">
    <property type="nucleotide sequence ID" value="NC_011745.1"/>
</dbReference>
<dbReference type="SMR" id="B7MNV5"/>
<dbReference type="GeneID" id="93777338"/>
<dbReference type="KEGG" id="ecq:ECED1_0097"/>
<dbReference type="HOGENOM" id="CLU_046528_1_0_6"/>
<dbReference type="UniPathway" id="UPA00359">
    <property type="reaction ID" value="UER00478"/>
</dbReference>
<dbReference type="Proteomes" id="UP000000748">
    <property type="component" value="Chromosome"/>
</dbReference>
<dbReference type="GO" id="GO:0016020">
    <property type="term" value="C:membrane"/>
    <property type="evidence" value="ECO:0007669"/>
    <property type="project" value="GOC"/>
</dbReference>
<dbReference type="GO" id="GO:0046872">
    <property type="term" value="F:metal ion binding"/>
    <property type="evidence" value="ECO:0007669"/>
    <property type="project" value="UniProtKB-KW"/>
</dbReference>
<dbReference type="GO" id="GO:0103117">
    <property type="term" value="F:UDP-3-O-acyl-N-acetylglucosamine deacetylase activity"/>
    <property type="evidence" value="ECO:0007669"/>
    <property type="project" value="UniProtKB-UniRule"/>
</dbReference>
<dbReference type="GO" id="GO:0009245">
    <property type="term" value="P:lipid A biosynthetic process"/>
    <property type="evidence" value="ECO:0007669"/>
    <property type="project" value="UniProtKB-UniRule"/>
</dbReference>
<dbReference type="FunFam" id="3.30.1700.10:FF:000001">
    <property type="entry name" value="UDP-3-O-acyl-N-acetylglucosamine deacetylase"/>
    <property type="match status" value="1"/>
</dbReference>
<dbReference type="FunFam" id="3.30.230.20:FF:000001">
    <property type="entry name" value="UDP-3-O-acyl-N-acetylglucosamine deacetylase"/>
    <property type="match status" value="1"/>
</dbReference>
<dbReference type="Gene3D" id="3.30.230.20">
    <property type="entry name" value="lpxc deacetylase, domain 1"/>
    <property type="match status" value="1"/>
</dbReference>
<dbReference type="Gene3D" id="3.30.1700.10">
    <property type="entry name" value="lpxc deacetylase, domain 2"/>
    <property type="match status" value="1"/>
</dbReference>
<dbReference type="HAMAP" id="MF_00388">
    <property type="entry name" value="LpxC"/>
    <property type="match status" value="1"/>
</dbReference>
<dbReference type="InterPro" id="IPR020568">
    <property type="entry name" value="Ribosomal_Su5_D2-typ_SF"/>
</dbReference>
<dbReference type="InterPro" id="IPR004463">
    <property type="entry name" value="UDP-acyl_GlcNac_deAcase"/>
</dbReference>
<dbReference type="InterPro" id="IPR011334">
    <property type="entry name" value="UDP-acyl_GlcNac_deAcase_C"/>
</dbReference>
<dbReference type="InterPro" id="IPR015870">
    <property type="entry name" value="UDP-acyl_N-AcGlcN_deAcase_N"/>
</dbReference>
<dbReference type="NCBIfam" id="TIGR00325">
    <property type="entry name" value="lpxC"/>
    <property type="match status" value="1"/>
</dbReference>
<dbReference type="PANTHER" id="PTHR33694">
    <property type="entry name" value="UDP-3-O-ACYL-N-ACETYLGLUCOSAMINE DEACETYLASE 1, MITOCHONDRIAL-RELATED"/>
    <property type="match status" value="1"/>
</dbReference>
<dbReference type="PANTHER" id="PTHR33694:SF1">
    <property type="entry name" value="UDP-3-O-ACYL-N-ACETYLGLUCOSAMINE DEACETYLASE 1, MITOCHONDRIAL-RELATED"/>
    <property type="match status" value="1"/>
</dbReference>
<dbReference type="Pfam" id="PF03331">
    <property type="entry name" value="LpxC"/>
    <property type="match status" value="1"/>
</dbReference>
<dbReference type="SUPFAM" id="SSF54211">
    <property type="entry name" value="Ribosomal protein S5 domain 2-like"/>
    <property type="match status" value="2"/>
</dbReference>
<accession>B7MNV5</accession>